<sequence length="160" mass="17616">MAEKTYPMTLEEKEKLEKELEELKLVRRPEIVERIKIARSYGDLSENSEYEAAKDEQAFVEGQISTIETKIRYAEIVNSDAVAADEVAIGKTVTVQEVGETEEEVYHIVGAAGADVFANKISNESPIGHALIGKKTGDVATIETPAGSYDVKILKVEKTK</sequence>
<organism>
    <name type="scientific">Streptococcus suis (strain 05ZYH33)</name>
    <dbReference type="NCBI Taxonomy" id="391295"/>
    <lineage>
        <taxon>Bacteria</taxon>
        <taxon>Bacillati</taxon>
        <taxon>Bacillota</taxon>
        <taxon>Bacilli</taxon>
        <taxon>Lactobacillales</taxon>
        <taxon>Streptococcaceae</taxon>
        <taxon>Streptococcus</taxon>
    </lineage>
</organism>
<keyword id="KW-0175">Coiled coil</keyword>
<keyword id="KW-0238">DNA-binding</keyword>
<keyword id="KW-0804">Transcription</keyword>
<keyword id="KW-0805">Transcription regulation</keyword>
<reference key="1">
    <citation type="journal article" date="2007" name="PLoS ONE">
        <title>A glimpse of streptococcal toxic shock syndrome from comparative genomics of S. suis 2 Chinese isolates.</title>
        <authorList>
            <person name="Chen C."/>
            <person name="Tang J."/>
            <person name="Dong W."/>
            <person name="Wang C."/>
            <person name="Feng Y."/>
            <person name="Wang J."/>
            <person name="Zheng F."/>
            <person name="Pan X."/>
            <person name="Liu D."/>
            <person name="Li M."/>
            <person name="Song Y."/>
            <person name="Zhu X."/>
            <person name="Sun H."/>
            <person name="Feng T."/>
            <person name="Guo Z."/>
            <person name="Ju A."/>
            <person name="Ge J."/>
            <person name="Dong Y."/>
            <person name="Sun W."/>
            <person name="Jiang Y."/>
            <person name="Wang J."/>
            <person name="Yan J."/>
            <person name="Yang H."/>
            <person name="Wang X."/>
            <person name="Gao G.F."/>
            <person name="Yang R."/>
            <person name="Wang J."/>
            <person name="Yu J."/>
        </authorList>
    </citation>
    <scope>NUCLEOTIDE SEQUENCE [LARGE SCALE GENOMIC DNA]</scope>
    <source>
        <strain>05ZYH33</strain>
    </source>
</reference>
<feature type="chain" id="PRO_1000034312" description="Transcription elongation factor GreA">
    <location>
        <begin position="1"/>
        <end position="160"/>
    </location>
</feature>
<feature type="coiled-coil region" evidence="1">
    <location>
        <begin position="1"/>
        <end position="31"/>
    </location>
</feature>
<gene>
    <name evidence="1" type="primary">greA</name>
    <name type="ordered locus">SSU05_1716</name>
</gene>
<evidence type="ECO:0000255" key="1">
    <source>
        <dbReference type="HAMAP-Rule" id="MF_00105"/>
    </source>
</evidence>
<proteinExistence type="inferred from homology"/>
<comment type="function">
    <text evidence="1">Necessary for efficient RNA polymerase transcription elongation past template-encoded arresting sites. The arresting sites in DNA have the property of trapping a certain fraction of elongating RNA polymerases that pass through, resulting in locked ternary complexes. Cleavage of the nascent transcript by cleavage factors such as GreA or GreB allows the resumption of elongation from the new 3'terminus. GreA releases sequences of 2 to 3 nucleotides.</text>
</comment>
<comment type="similarity">
    <text evidence="1">Belongs to the GreA/GreB family.</text>
</comment>
<protein>
    <recommendedName>
        <fullName evidence="1">Transcription elongation factor GreA</fullName>
    </recommendedName>
    <alternativeName>
        <fullName evidence="1">Transcript cleavage factor GreA</fullName>
    </alternativeName>
</protein>
<name>GREA_STRSY</name>
<accession>A4VX43</accession>
<dbReference type="EMBL" id="CP000407">
    <property type="protein sequence ID" value="ABP90682.1"/>
    <property type="molecule type" value="Genomic_DNA"/>
</dbReference>
<dbReference type="SMR" id="A4VX43"/>
<dbReference type="STRING" id="391295.SSU05_1716"/>
<dbReference type="KEGG" id="ssu:SSU05_1716"/>
<dbReference type="eggNOG" id="COG0782">
    <property type="taxonomic scope" value="Bacteria"/>
</dbReference>
<dbReference type="HOGENOM" id="CLU_101379_2_1_9"/>
<dbReference type="GO" id="GO:0003677">
    <property type="term" value="F:DNA binding"/>
    <property type="evidence" value="ECO:0007669"/>
    <property type="project" value="UniProtKB-UniRule"/>
</dbReference>
<dbReference type="GO" id="GO:0070063">
    <property type="term" value="F:RNA polymerase binding"/>
    <property type="evidence" value="ECO:0007669"/>
    <property type="project" value="InterPro"/>
</dbReference>
<dbReference type="GO" id="GO:0006354">
    <property type="term" value="P:DNA-templated transcription elongation"/>
    <property type="evidence" value="ECO:0007669"/>
    <property type="project" value="TreeGrafter"/>
</dbReference>
<dbReference type="GO" id="GO:0032784">
    <property type="term" value="P:regulation of DNA-templated transcription elongation"/>
    <property type="evidence" value="ECO:0007669"/>
    <property type="project" value="UniProtKB-UniRule"/>
</dbReference>
<dbReference type="FunFam" id="1.10.287.180:FF:000001">
    <property type="entry name" value="Transcription elongation factor GreA"/>
    <property type="match status" value="1"/>
</dbReference>
<dbReference type="FunFam" id="3.10.50.30:FF:000001">
    <property type="entry name" value="Transcription elongation factor GreA"/>
    <property type="match status" value="1"/>
</dbReference>
<dbReference type="Gene3D" id="3.10.50.30">
    <property type="entry name" value="Transcription elongation factor, GreA/GreB, C-terminal domain"/>
    <property type="match status" value="1"/>
</dbReference>
<dbReference type="Gene3D" id="1.10.287.180">
    <property type="entry name" value="Transcription elongation factor, GreA/GreB, N-terminal domain"/>
    <property type="match status" value="1"/>
</dbReference>
<dbReference type="HAMAP" id="MF_00105">
    <property type="entry name" value="GreA_GreB"/>
    <property type="match status" value="1"/>
</dbReference>
<dbReference type="InterPro" id="IPR036953">
    <property type="entry name" value="GreA/GreB_C_sf"/>
</dbReference>
<dbReference type="InterPro" id="IPR018151">
    <property type="entry name" value="TF_GreA/GreB_CS"/>
</dbReference>
<dbReference type="InterPro" id="IPR006359">
    <property type="entry name" value="Tscrpt_elong_fac_GreA"/>
</dbReference>
<dbReference type="InterPro" id="IPR028624">
    <property type="entry name" value="Tscrpt_elong_fac_GreA/B"/>
</dbReference>
<dbReference type="InterPro" id="IPR001437">
    <property type="entry name" value="Tscrpt_elong_fac_GreA/B_C"/>
</dbReference>
<dbReference type="InterPro" id="IPR023459">
    <property type="entry name" value="Tscrpt_elong_fac_GreA/B_fam"/>
</dbReference>
<dbReference type="InterPro" id="IPR022691">
    <property type="entry name" value="Tscrpt_elong_fac_GreA/B_N"/>
</dbReference>
<dbReference type="InterPro" id="IPR036805">
    <property type="entry name" value="Tscrpt_elong_fac_GreA/B_N_sf"/>
</dbReference>
<dbReference type="NCBIfam" id="TIGR01462">
    <property type="entry name" value="greA"/>
    <property type="match status" value="1"/>
</dbReference>
<dbReference type="NCBIfam" id="NF001260">
    <property type="entry name" value="PRK00226.1-1"/>
    <property type="match status" value="1"/>
</dbReference>
<dbReference type="NCBIfam" id="NF001263">
    <property type="entry name" value="PRK00226.1-4"/>
    <property type="match status" value="1"/>
</dbReference>
<dbReference type="PANTHER" id="PTHR30437">
    <property type="entry name" value="TRANSCRIPTION ELONGATION FACTOR GREA"/>
    <property type="match status" value="1"/>
</dbReference>
<dbReference type="PANTHER" id="PTHR30437:SF4">
    <property type="entry name" value="TRANSCRIPTION ELONGATION FACTOR GREA"/>
    <property type="match status" value="1"/>
</dbReference>
<dbReference type="Pfam" id="PF01272">
    <property type="entry name" value="GreA_GreB"/>
    <property type="match status" value="1"/>
</dbReference>
<dbReference type="Pfam" id="PF03449">
    <property type="entry name" value="GreA_GreB_N"/>
    <property type="match status" value="1"/>
</dbReference>
<dbReference type="PIRSF" id="PIRSF006092">
    <property type="entry name" value="GreA_GreB"/>
    <property type="match status" value="1"/>
</dbReference>
<dbReference type="SUPFAM" id="SSF54534">
    <property type="entry name" value="FKBP-like"/>
    <property type="match status" value="1"/>
</dbReference>
<dbReference type="SUPFAM" id="SSF46557">
    <property type="entry name" value="GreA transcript cleavage protein, N-terminal domain"/>
    <property type="match status" value="1"/>
</dbReference>
<dbReference type="PROSITE" id="PS00829">
    <property type="entry name" value="GREAB_1"/>
    <property type="match status" value="1"/>
</dbReference>
<dbReference type="PROSITE" id="PS00830">
    <property type="entry name" value="GREAB_2"/>
    <property type="match status" value="1"/>
</dbReference>